<proteinExistence type="inferred from homology"/>
<dbReference type="EMBL" id="AP009240">
    <property type="protein sequence ID" value="BAG77725.1"/>
    <property type="molecule type" value="Genomic_DNA"/>
</dbReference>
<dbReference type="RefSeq" id="WP_001240105.1">
    <property type="nucleotide sequence ID" value="NC_011415.1"/>
</dbReference>
<dbReference type="SMR" id="B6I117"/>
<dbReference type="GeneID" id="75205790"/>
<dbReference type="KEGG" id="ecy:ECSE_2201"/>
<dbReference type="HOGENOM" id="CLU_080662_1_0_6"/>
<dbReference type="Proteomes" id="UP000008199">
    <property type="component" value="Chromosome"/>
</dbReference>
<dbReference type="GO" id="GO:0005886">
    <property type="term" value="C:plasma membrane"/>
    <property type="evidence" value="ECO:0007669"/>
    <property type="project" value="UniProtKB-SubCell"/>
</dbReference>
<dbReference type="GO" id="GO:0009055">
    <property type="term" value="F:electron transfer activity"/>
    <property type="evidence" value="ECO:0007669"/>
    <property type="project" value="UniProtKB-UniRule"/>
</dbReference>
<dbReference type="GO" id="GO:0010181">
    <property type="term" value="F:FMN binding"/>
    <property type="evidence" value="ECO:0007669"/>
    <property type="project" value="UniProtKB-UniRule"/>
</dbReference>
<dbReference type="GO" id="GO:0020037">
    <property type="term" value="F:heme binding"/>
    <property type="evidence" value="ECO:0007669"/>
    <property type="project" value="UniProtKB-UniRule"/>
</dbReference>
<dbReference type="GO" id="GO:0046872">
    <property type="term" value="F:metal ion binding"/>
    <property type="evidence" value="ECO:0007669"/>
    <property type="project" value="UniProtKB-KW"/>
</dbReference>
<dbReference type="GO" id="GO:0016679">
    <property type="term" value="F:oxidoreductase activity, acting on diphenols and related substances as donors"/>
    <property type="evidence" value="ECO:0007669"/>
    <property type="project" value="TreeGrafter"/>
</dbReference>
<dbReference type="GO" id="GO:0030091">
    <property type="term" value="P:protein repair"/>
    <property type="evidence" value="ECO:0007669"/>
    <property type="project" value="UniProtKB-UniRule"/>
</dbReference>
<dbReference type="HAMAP" id="MF_01207">
    <property type="entry name" value="MsrQ"/>
    <property type="match status" value="1"/>
</dbReference>
<dbReference type="InterPro" id="IPR013130">
    <property type="entry name" value="Fe3_Rdtase_TM_dom"/>
</dbReference>
<dbReference type="InterPro" id="IPR022837">
    <property type="entry name" value="MsrQ-like"/>
</dbReference>
<dbReference type="NCBIfam" id="NF003830">
    <property type="entry name" value="PRK05419.1-1"/>
    <property type="match status" value="1"/>
</dbReference>
<dbReference type="NCBIfam" id="NF003831">
    <property type="entry name" value="PRK05419.1-2"/>
    <property type="match status" value="1"/>
</dbReference>
<dbReference type="NCBIfam" id="NF003832">
    <property type="entry name" value="PRK05419.1-4"/>
    <property type="match status" value="1"/>
</dbReference>
<dbReference type="PANTHER" id="PTHR36964">
    <property type="entry name" value="PROTEIN-METHIONINE-SULFOXIDE REDUCTASE HEME-BINDING SUBUNIT MSRQ"/>
    <property type="match status" value="1"/>
</dbReference>
<dbReference type="PANTHER" id="PTHR36964:SF1">
    <property type="entry name" value="PROTEIN-METHIONINE-SULFOXIDE REDUCTASE HEME-BINDING SUBUNIT MSRQ"/>
    <property type="match status" value="1"/>
</dbReference>
<dbReference type="Pfam" id="PF01794">
    <property type="entry name" value="Ferric_reduct"/>
    <property type="match status" value="1"/>
</dbReference>
<comment type="function">
    <text evidence="1">Part of the MsrPQ system that repairs oxidized periplasmic proteins containing methionine sulfoxide residues (Met-O), using respiratory chain electrons. Thus protects these proteins from oxidative-stress damage caused by reactive species of oxygen and chlorine generated by the host defense mechanisms. MsrPQ is essential for the maintenance of envelope integrity under bleach stress, rescuing a wide series of structurally unrelated periplasmic proteins from methionine oxidation, including the primary periplasmic chaperone SurA and the lipoprotein Pal. MsrQ provides electrons for reduction to the reductase catalytic subunit MsrP, using the quinone pool of the respiratory chain.</text>
</comment>
<comment type="cofactor">
    <cofactor evidence="1">
        <name>FMN</name>
        <dbReference type="ChEBI" id="CHEBI:58210"/>
    </cofactor>
    <text evidence="1">Binds 1 FMN per subunit.</text>
</comment>
<comment type="cofactor">
    <cofactor evidence="1">
        <name>heme b</name>
        <dbReference type="ChEBI" id="CHEBI:60344"/>
    </cofactor>
    <text evidence="1">Binds 1 heme b (iron(II)-protoporphyrin IX) group per subunit.</text>
</comment>
<comment type="subunit">
    <text evidence="1">Heterodimer of a catalytic subunit (MsrP) and a heme-binding subunit (MsrQ).</text>
</comment>
<comment type="subcellular location">
    <subcellularLocation>
        <location evidence="1">Cell inner membrane</location>
        <topology evidence="1">Multi-pass membrane protein</topology>
    </subcellularLocation>
</comment>
<comment type="similarity">
    <text evidence="1">Belongs to the MsrQ family.</text>
</comment>
<evidence type="ECO:0000255" key="1">
    <source>
        <dbReference type="HAMAP-Rule" id="MF_01207"/>
    </source>
</evidence>
<accession>B6I117</accession>
<feature type="chain" id="PRO_1000138734" description="Protein-methionine-sulfoxide reductase heme-binding subunit MsrQ">
    <location>
        <begin position="1"/>
        <end position="211"/>
    </location>
</feature>
<feature type="transmembrane region" description="Helical" evidence="1">
    <location>
        <begin position="17"/>
        <end position="37"/>
    </location>
</feature>
<feature type="transmembrane region" description="Helical" evidence="1">
    <location>
        <begin position="82"/>
        <end position="102"/>
    </location>
</feature>
<feature type="transmembrane region" description="Helical" evidence="1">
    <location>
        <begin position="116"/>
        <end position="136"/>
    </location>
</feature>
<feature type="transmembrane region" description="Helical" evidence="1">
    <location>
        <begin position="153"/>
        <end position="173"/>
    </location>
</feature>
<keyword id="KW-0997">Cell inner membrane</keyword>
<keyword id="KW-1003">Cell membrane</keyword>
<keyword id="KW-0249">Electron transport</keyword>
<keyword id="KW-0285">Flavoprotein</keyword>
<keyword id="KW-0288">FMN</keyword>
<keyword id="KW-0349">Heme</keyword>
<keyword id="KW-0408">Iron</keyword>
<keyword id="KW-0472">Membrane</keyword>
<keyword id="KW-0479">Metal-binding</keyword>
<keyword id="KW-0812">Transmembrane</keyword>
<keyword id="KW-1133">Transmembrane helix</keyword>
<keyword id="KW-0813">Transport</keyword>
<name>MSRQ_ECOSE</name>
<gene>
    <name evidence="1" type="primary">msrQ</name>
    <name type="ordered locus">ECSE_2201</name>
</gene>
<protein>
    <recommendedName>
        <fullName evidence="1">Protein-methionine-sulfoxide reductase heme-binding subunit MsrQ</fullName>
    </recommendedName>
    <alternativeName>
        <fullName evidence="1">Flavocytochrome MsrQ</fullName>
    </alternativeName>
</protein>
<reference key="1">
    <citation type="journal article" date="2008" name="DNA Res.">
        <title>Complete genome sequence and comparative analysis of the wild-type commensal Escherichia coli strain SE11 isolated from a healthy adult.</title>
        <authorList>
            <person name="Oshima K."/>
            <person name="Toh H."/>
            <person name="Ogura Y."/>
            <person name="Sasamoto H."/>
            <person name="Morita H."/>
            <person name="Park S.-H."/>
            <person name="Ooka T."/>
            <person name="Iyoda S."/>
            <person name="Taylor T.D."/>
            <person name="Hayashi T."/>
            <person name="Itoh K."/>
            <person name="Hattori M."/>
        </authorList>
    </citation>
    <scope>NUCLEOTIDE SEQUENCE [LARGE SCALE GENOMIC DNA]</scope>
    <source>
        <strain>SE11</strain>
    </source>
</reference>
<sequence>MRLTAKQVTWLKVSLHLAGLLPFLWLVWAINHGGLGADPVKDIQHFTGRTALKFLLATLLITPLARYAKQPLLIRTRRLLGLWCFAWATLHLTSYALLELGVNNLALLGKELITRPYLTLGIISWVILLALAFTSTQAMQRKLGKHWQQLHNFVYLVAILAPIHYLWSVKIISPQPLIYAGLAVLLLALRYKKLRSLFNRLRKQVHNKLSV</sequence>
<organism>
    <name type="scientific">Escherichia coli (strain SE11)</name>
    <dbReference type="NCBI Taxonomy" id="409438"/>
    <lineage>
        <taxon>Bacteria</taxon>
        <taxon>Pseudomonadati</taxon>
        <taxon>Pseudomonadota</taxon>
        <taxon>Gammaproteobacteria</taxon>
        <taxon>Enterobacterales</taxon>
        <taxon>Enterobacteriaceae</taxon>
        <taxon>Escherichia</taxon>
    </lineage>
</organism>